<feature type="chain" id="PRO_0000091248" description="Elongation factor G">
    <location>
        <begin position="1"/>
        <end position="691"/>
    </location>
</feature>
<feature type="domain" description="tr-type G">
    <location>
        <begin position="10"/>
        <end position="284"/>
    </location>
</feature>
<feature type="binding site" evidence="1">
    <location>
        <begin position="19"/>
        <end position="26"/>
    </location>
    <ligand>
        <name>GTP</name>
        <dbReference type="ChEBI" id="CHEBI:37565"/>
    </ligand>
</feature>
<feature type="binding site" evidence="1">
    <location>
        <begin position="83"/>
        <end position="87"/>
    </location>
    <ligand>
        <name>GTP</name>
        <dbReference type="ChEBI" id="CHEBI:37565"/>
    </ligand>
</feature>
<feature type="binding site" evidence="1">
    <location>
        <begin position="137"/>
        <end position="140"/>
    </location>
    <ligand>
        <name>GTP</name>
        <dbReference type="ChEBI" id="CHEBI:37565"/>
    </ligand>
</feature>
<feature type="helix" evidence="4">
    <location>
        <begin position="9"/>
        <end position="11"/>
    </location>
</feature>
<feature type="strand" evidence="4">
    <location>
        <begin position="12"/>
        <end position="19"/>
    </location>
</feature>
<feature type="turn" evidence="9">
    <location>
        <begin position="21"/>
        <end position="24"/>
    </location>
</feature>
<feature type="helix" evidence="4">
    <location>
        <begin position="25"/>
        <end position="36"/>
    </location>
</feature>
<feature type="turn" evidence="4">
    <location>
        <begin position="39"/>
        <end position="41"/>
    </location>
</feature>
<feature type="strand" evidence="8">
    <location>
        <begin position="48"/>
        <end position="50"/>
    </location>
</feature>
<feature type="strand" evidence="8">
    <location>
        <begin position="52"/>
        <end position="54"/>
    </location>
</feature>
<feature type="helix" evidence="8">
    <location>
        <begin position="55"/>
        <end position="60"/>
    </location>
</feature>
<feature type="strand" evidence="4">
    <location>
        <begin position="68"/>
        <end position="74"/>
    </location>
</feature>
<feature type="strand" evidence="4">
    <location>
        <begin position="77"/>
        <end position="82"/>
    </location>
</feature>
<feature type="strand" evidence="6">
    <location>
        <begin position="86"/>
        <end position="89"/>
    </location>
</feature>
<feature type="helix" evidence="4">
    <location>
        <begin position="91"/>
        <end position="100"/>
    </location>
</feature>
<feature type="strand" evidence="4">
    <location>
        <begin position="102"/>
        <end position="108"/>
    </location>
</feature>
<feature type="strand" evidence="4">
    <location>
        <begin position="112"/>
        <end position="114"/>
    </location>
</feature>
<feature type="helix" evidence="4">
    <location>
        <begin position="118"/>
        <end position="127"/>
    </location>
</feature>
<feature type="strand" evidence="4">
    <location>
        <begin position="132"/>
        <end position="136"/>
    </location>
</feature>
<feature type="strand" evidence="8">
    <location>
        <begin position="141"/>
        <end position="143"/>
    </location>
</feature>
<feature type="helix" evidence="4">
    <location>
        <begin position="146"/>
        <end position="155"/>
    </location>
</feature>
<feature type="strand" evidence="8">
    <location>
        <begin position="157"/>
        <end position="159"/>
    </location>
</feature>
<feature type="strand" evidence="4">
    <location>
        <begin position="161"/>
        <end position="163"/>
    </location>
</feature>
<feature type="strand" evidence="4">
    <location>
        <begin position="165"/>
        <end position="169"/>
    </location>
</feature>
<feature type="helix" evidence="4">
    <location>
        <begin position="171"/>
        <end position="173"/>
    </location>
</feature>
<feature type="strand" evidence="4">
    <location>
        <begin position="176"/>
        <end position="179"/>
    </location>
</feature>
<feature type="turn" evidence="4">
    <location>
        <begin position="180"/>
        <end position="183"/>
    </location>
</feature>
<feature type="strand" evidence="4">
    <location>
        <begin position="184"/>
        <end position="193"/>
    </location>
</feature>
<feature type="strand" evidence="4">
    <location>
        <begin position="196"/>
        <end position="199"/>
    </location>
</feature>
<feature type="helix" evidence="4">
    <location>
        <begin position="203"/>
        <end position="205"/>
    </location>
</feature>
<feature type="helix" evidence="4">
    <location>
        <begin position="206"/>
        <end position="220"/>
    </location>
</feature>
<feature type="helix" evidence="4">
    <location>
        <begin position="221"/>
        <end position="223"/>
    </location>
</feature>
<feature type="helix" evidence="4">
    <location>
        <begin position="225"/>
        <end position="233"/>
    </location>
</feature>
<feature type="helix" evidence="4">
    <location>
        <begin position="239"/>
        <end position="251"/>
    </location>
</feature>
<feature type="strand" evidence="4">
    <location>
        <begin position="256"/>
        <end position="260"/>
    </location>
</feature>
<feature type="turn" evidence="4">
    <location>
        <begin position="263"/>
        <end position="266"/>
    </location>
</feature>
<feature type="helix" evidence="4">
    <location>
        <begin position="269"/>
        <end position="279"/>
    </location>
</feature>
<feature type="turn" evidence="4">
    <location>
        <begin position="283"/>
        <end position="285"/>
    </location>
</feature>
<feature type="strand" evidence="4">
    <location>
        <begin position="289"/>
        <end position="292"/>
    </location>
</feature>
<feature type="strand" evidence="4">
    <location>
        <begin position="298"/>
        <end position="301"/>
    </location>
</feature>
<feature type="strand" evidence="7">
    <location>
        <begin position="305"/>
        <end position="307"/>
    </location>
</feature>
<feature type="strand" evidence="4">
    <location>
        <begin position="310"/>
        <end position="317"/>
    </location>
</feature>
<feature type="turn" evidence="4">
    <location>
        <begin position="320"/>
        <end position="322"/>
    </location>
</feature>
<feature type="strand" evidence="4">
    <location>
        <begin position="325"/>
        <end position="336"/>
    </location>
</feature>
<feature type="strand" evidence="4">
    <location>
        <begin position="340"/>
        <end position="343"/>
    </location>
</feature>
<feature type="turn" evidence="4">
    <location>
        <begin position="344"/>
        <end position="347"/>
    </location>
</feature>
<feature type="strand" evidence="4">
    <location>
        <begin position="348"/>
        <end position="358"/>
    </location>
</feature>
<feature type="strand" evidence="4">
    <location>
        <begin position="363"/>
        <end position="370"/>
    </location>
</feature>
<feature type="strand" evidence="4">
    <location>
        <begin position="374"/>
        <end position="379"/>
    </location>
</feature>
<feature type="strand" evidence="4">
    <location>
        <begin position="388"/>
        <end position="390"/>
    </location>
</feature>
<feature type="strand" evidence="5">
    <location>
        <begin position="392"/>
        <end position="394"/>
    </location>
</feature>
<feature type="strand" evidence="4">
    <location>
        <begin position="398"/>
        <end position="400"/>
    </location>
</feature>
<feature type="strand" evidence="4">
    <location>
        <begin position="409"/>
        <end position="418"/>
    </location>
</feature>
<feature type="helix" evidence="4">
    <location>
        <begin position="419"/>
        <end position="429"/>
    </location>
</feature>
<feature type="helix" evidence="4">
    <location>
        <begin position="431"/>
        <end position="434"/>
    </location>
</feature>
<feature type="strand" evidence="4">
    <location>
        <begin position="439"/>
        <end position="442"/>
    </location>
</feature>
<feature type="strand" evidence="6">
    <location>
        <begin position="444"/>
        <end position="447"/>
    </location>
</feature>
<feature type="strand" evidence="4">
    <location>
        <begin position="449"/>
        <end position="454"/>
    </location>
</feature>
<feature type="helix" evidence="4">
    <location>
        <begin position="456"/>
        <end position="467"/>
    </location>
</feature>
<feature type="turn" evidence="3">
    <location>
        <begin position="468"/>
        <end position="470"/>
    </location>
</feature>
<feature type="strand" evidence="4">
    <location>
        <begin position="474"/>
        <end position="476"/>
    </location>
</feature>
<feature type="strand" evidence="5">
    <location>
        <begin position="479"/>
        <end position="481"/>
    </location>
</feature>
<feature type="strand" evidence="4">
    <location>
        <begin position="484"/>
        <end position="486"/>
    </location>
</feature>
<feature type="strand" evidence="4">
    <location>
        <begin position="491"/>
        <end position="501"/>
    </location>
</feature>
<feature type="strand" evidence="4">
    <location>
        <begin position="504"/>
        <end position="516"/>
    </location>
</feature>
<feature type="strand" evidence="4">
    <location>
        <begin position="523"/>
        <end position="527"/>
    </location>
</feature>
<feature type="strand" evidence="4">
    <location>
        <begin position="531"/>
        <end position="534"/>
    </location>
</feature>
<feature type="helix" evidence="4">
    <location>
        <begin position="536"/>
        <end position="538"/>
    </location>
</feature>
<feature type="helix" evidence="4">
    <location>
        <begin position="539"/>
        <end position="550"/>
    </location>
</feature>
<feature type="turn" evidence="4">
    <location>
        <begin position="554"/>
        <end position="556"/>
    </location>
</feature>
<feature type="strand" evidence="4">
    <location>
        <begin position="562"/>
        <end position="571"/>
    </location>
</feature>
<feature type="turn" evidence="4">
    <location>
        <begin position="574"/>
        <end position="576"/>
    </location>
</feature>
<feature type="helix" evidence="4">
    <location>
        <begin position="579"/>
        <end position="596"/>
    </location>
</feature>
<feature type="strand" evidence="4">
    <location>
        <begin position="600"/>
        <end position="612"/>
    </location>
</feature>
<feature type="helix" evidence="4">
    <location>
        <begin position="614"/>
        <end position="616"/>
    </location>
</feature>
<feature type="helix" evidence="4">
    <location>
        <begin position="617"/>
        <end position="626"/>
    </location>
</feature>
<feature type="strand" evidence="4">
    <location>
        <begin position="630"/>
        <end position="637"/>
    </location>
</feature>
<feature type="strand" evidence="4">
    <location>
        <begin position="640"/>
        <end position="648"/>
    </location>
</feature>
<feature type="helix" evidence="4">
    <location>
        <begin position="649"/>
        <end position="651"/>
    </location>
</feature>
<feature type="helix" evidence="4">
    <location>
        <begin position="655"/>
        <end position="662"/>
    </location>
</feature>
<feature type="turn" evidence="4">
    <location>
        <begin position="663"/>
        <end position="665"/>
    </location>
</feature>
<feature type="strand" evidence="4">
    <location>
        <begin position="668"/>
        <end position="678"/>
    </location>
</feature>
<feature type="helix" evidence="4">
    <location>
        <begin position="681"/>
        <end position="686"/>
    </location>
</feature>
<comment type="function">
    <text>Catalyzes the GTP-dependent ribosomal translocation step during translation elongation. During this step, the ribosome changes from the pre-translocational (PRE) to the post-translocational (POST) state as the newly formed A-site-bound peptidyl-tRNA and P-site-bound deacylated tRNA move to the P and E sites, respectively. Catalyzes the coordinated movement of the two tRNA molecules, the mRNA and conformational changes in the ribosome.</text>
</comment>
<comment type="subcellular location">
    <subcellularLocation>
        <location>Cytoplasm</location>
    </subcellularLocation>
</comment>
<comment type="similarity">
    <text evidence="2">Belongs to the TRAFAC class translation factor GTPase superfamily. Classic translation factor GTPase family. EF-G/EF-2 subfamily.</text>
</comment>
<comment type="caution">
    <text evidence="2">The sequence shown here has been extracted from PDB entry 1KTV.</text>
</comment>
<proteinExistence type="evidence at protein level"/>
<gene>
    <name type="primary">fusA</name>
    <name type="synonym">fus</name>
</gene>
<organism>
    <name type="scientific">Thermus thermophilus</name>
    <dbReference type="NCBI Taxonomy" id="274"/>
    <lineage>
        <taxon>Bacteria</taxon>
        <taxon>Thermotogati</taxon>
        <taxon>Deinococcota</taxon>
        <taxon>Deinococci</taxon>
        <taxon>Thermales</taxon>
        <taxon>Thermaceae</taxon>
        <taxon>Thermus</taxon>
    </lineage>
</organism>
<keyword id="KW-0002">3D-structure</keyword>
<keyword id="KW-0963">Cytoplasm</keyword>
<keyword id="KW-0251">Elongation factor</keyword>
<keyword id="KW-0342">GTP-binding</keyword>
<keyword id="KW-0547">Nucleotide-binding</keyword>
<keyword id="KW-0648">Protein biosynthesis</keyword>
<name>EFG_THETH</name>
<protein>
    <recommendedName>
        <fullName>Elongation factor G</fullName>
        <shortName>EF-G</shortName>
    </recommendedName>
</protein>
<sequence>MAVKVEYDLKRLRNIGIAAHIDAGKTTTTERILYYTGRIHKIGEVHEGAATMDFMEQERERGITITAAVTTCFWKDHRINIIDTPGHVDFTIEVERSMRVLDGAIVVFDSSQGVEPQSETVWRQAEKYKVPRIAFANKMDKTGADLWLVIRTMQERLGARPVVMQLPIGREDTFSGIIDVLRMKAYTYGNDLGTDIREIPIPEEYLDQAREYHEKLVEVAADFDENIMLKYLEGEEPTEEELVAAIRKGTIDLKITPVFLGSALKNKGVQLLLDAVVDYLPSPLDIPPIKGTTPEGEVVEIHPDPNGPLAALAFKIMADPYVGRLTFIRVYSGTLTSGSYVYNTTKGRKERVARLLRMHANHREEVEELKAGDLGAVVGLKETITGDTLVGEDAPRVILESIEVPEPVIDVAIEPKTKADQEKLSQALARLAEEDPTFRVSTHPETGQTIISGMGELHLEIIVDRLKREFKVDANVGKPQVAYRETITKPVDVEGKFIRQTGGRGQYGHVKIKVEPLPRGSGFEFVNAIVGGVIPKEYIPAVQKGIEEAMQSGPLIGFPVVDIKVTLYDGSYHEVDSSEMAFKIAGSMAIKEAVQKGDPVILEPIMRVEVTTPEEYMGDVIGDLNARRGQILGMEPRGNAQVIRAFVPLAEMFGYATDLRSKTQGRGSFVMFFDHYQEVPKQVQEKLIKGQ</sequence>
<accession>P13551</accession>
<dbReference type="RefSeq" id="WP_011228848.1">
    <property type="nucleotide sequence ID" value="NZ_DFSP01000024.1"/>
</dbReference>
<dbReference type="PDB" id="1FNM">
    <property type="method" value="X-ray"/>
    <property type="resolution" value="2.80 A"/>
    <property type="chains" value="A=1-691"/>
</dbReference>
<dbReference type="PDB" id="1JQM">
    <property type="method" value="EM"/>
    <property type="chains" value="B=1-691"/>
</dbReference>
<dbReference type="PDB" id="1JQS">
    <property type="method" value="EM"/>
    <property type="chains" value="B=220-251, C=606-673"/>
</dbReference>
<dbReference type="PDB" id="1KTV">
    <property type="method" value="X-ray"/>
    <property type="resolution" value="3.80 A"/>
    <property type="chains" value="A/B=1-691"/>
</dbReference>
<dbReference type="PDB" id="1PN6">
    <property type="method" value="EM"/>
    <property type="resolution" value="10.80 A"/>
    <property type="chains" value="A=1-691"/>
</dbReference>
<dbReference type="PDB" id="2BCW">
    <property type="method" value="EM"/>
    <property type="resolution" value="11.20 A"/>
    <property type="chains" value="C=200-257"/>
</dbReference>
<dbReference type="PDB" id="2BM0">
    <property type="method" value="X-ray"/>
    <property type="resolution" value="2.40 A"/>
    <property type="chains" value="A=1-691"/>
</dbReference>
<dbReference type="PDB" id="2BM1">
    <property type="method" value="X-ray"/>
    <property type="resolution" value="2.60 A"/>
    <property type="chains" value="A=1-691"/>
</dbReference>
<dbReference type="PDB" id="2BV3">
    <property type="method" value="X-ray"/>
    <property type="resolution" value="2.50 A"/>
    <property type="chains" value="A=1-691"/>
</dbReference>
<dbReference type="PDB" id="2J7K">
    <property type="method" value="X-ray"/>
    <property type="resolution" value="2.90 A"/>
    <property type="chains" value="A=1-691"/>
</dbReference>
<dbReference type="PDB" id="2OM7">
    <property type="method" value="EM"/>
    <property type="resolution" value="7.30 A"/>
    <property type="chains" value="L=1-691"/>
</dbReference>
<dbReference type="PDB" id="3IZP">
    <property type="method" value="EM"/>
    <property type="chains" value="E=1-688"/>
</dbReference>
<dbReference type="PDB" id="4M1K">
    <property type="method" value="X-ray"/>
    <property type="resolution" value="2.95 A"/>
    <property type="chains" value="A=1-691"/>
</dbReference>
<dbReference type="PDB" id="4MYT">
    <property type="method" value="X-ray"/>
    <property type="resolution" value="3.50 A"/>
    <property type="chains" value="A=1-691"/>
</dbReference>
<dbReference type="PDB" id="4MYU">
    <property type="method" value="X-ray"/>
    <property type="resolution" value="3.00 A"/>
    <property type="chains" value="A=1-691"/>
</dbReference>
<dbReference type="PDBsum" id="1FNM"/>
<dbReference type="PDBsum" id="1JQM"/>
<dbReference type="PDBsum" id="1JQS"/>
<dbReference type="PDBsum" id="1KTV"/>
<dbReference type="PDBsum" id="1PN6"/>
<dbReference type="PDBsum" id="2BCW"/>
<dbReference type="PDBsum" id="2BM0"/>
<dbReference type="PDBsum" id="2BM1"/>
<dbReference type="PDBsum" id="2BV3"/>
<dbReference type="PDBsum" id="2J7K"/>
<dbReference type="PDBsum" id="2OM7"/>
<dbReference type="PDBsum" id="3IZP"/>
<dbReference type="PDBsum" id="4M1K"/>
<dbReference type="PDBsum" id="4MYT"/>
<dbReference type="PDBsum" id="4MYU"/>
<dbReference type="EMDB" id="EMD-1315"/>
<dbReference type="SMR" id="P13551"/>
<dbReference type="DrugBank" id="DB02703">
    <property type="generic name" value="Fusidic acid"/>
</dbReference>
<dbReference type="DrugBank" id="DB04315">
    <property type="generic name" value="Guanosine-5'-Diphosphate"/>
</dbReference>
<dbReference type="GeneID" id="3169680"/>
<dbReference type="BRENDA" id="3.6.5.3">
    <property type="organism ID" value="2305"/>
</dbReference>
<dbReference type="EvolutionaryTrace" id="P13551"/>
<dbReference type="GO" id="GO:0005737">
    <property type="term" value="C:cytoplasm"/>
    <property type="evidence" value="ECO:0007669"/>
    <property type="project" value="UniProtKB-SubCell"/>
</dbReference>
<dbReference type="GO" id="GO:0019003">
    <property type="term" value="F:GDP binding"/>
    <property type="evidence" value="ECO:0000315"/>
    <property type="project" value="CAFA"/>
</dbReference>
<dbReference type="GO" id="GO:0005525">
    <property type="term" value="F:GTP binding"/>
    <property type="evidence" value="ECO:0000314"/>
    <property type="project" value="CAFA"/>
</dbReference>
<dbReference type="GO" id="GO:0003924">
    <property type="term" value="F:GTPase activity"/>
    <property type="evidence" value="ECO:0000314"/>
    <property type="project" value="CAFA"/>
</dbReference>
<dbReference type="GO" id="GO:0000287">
    <property type="term" value="F:magnesium ion binding"/>
    <property type="evidence" value="ECO:0000315"/>
    <property type="project" value="CAFA"/>
</dbReference>
<dbReference type="GO" id="GO:0043022">
    <property type="term" value="F:ribosome binding"/>
    <property type="evidence" value="ECO:0000314"/>
    <property type="project" value="CAFA"/>
</dbReference>
<dbReference type="GO" id="GO:0003746">
    <property type="term" value="F:translation elongation factor activity"/>
    <property type="evidence" value="ECO:0000314"/>
    <property type="project" value="CAFA"/>
</dbReference>
<dbReference type="GO" id="GO:0032790">
    <property type="term" value="P:ribosome disassembly"/>
    <property type="evidence" value="ECO:0007669"/>
    <property type="project" value="TreeGrafter"/>
</dbReference>
<dbReference type="GO" id="GO:0006414">
    <property type="term" value="P:translational elongation"/>
    <property type="evidence" value="ECO:0000314"/>
    <property type="project" value="CAFA"/>
</dbReference>
<dbReference type="CDD" id="cd01886">
    <property type="entry name" value="EF-G"/>
    <property type="match status" value="1"/>
</dbReference>
<dbReference type="CDD" id="cd16262">
    <property type="entry name" value="EFG_III"/>
    <property type="match status" value="1"/>
</dbReference>
<dbReference type="CDD" id="cd01434">
    <property type="entry name" value="EFG_mtEFG1_IV"/>
    <property type="match status" value="1"/>
</dbReference>
<dbReference type="CDD" id="cd03713">
    <property type="entry name" value="EFG_mtEFG_C"/>
    <property type="match status" value="1"/>
</dbReference>
<dbReference type="CDD" id="cd04088">
    <property type="entry name" value="EFG_mtEFG_II"/>
    <property type="match status" value="1"/>
</dbReference>
<dbReference type="DisProt" id="DP00021"/>
<dbReference type="FunFam" id="2.40.30.10:FF:000006">
    <property type="entry name" value="Elongation factor G"/>
    <property type="match status" value="1"/>
</dbReference>
<dbReference type="FunFam" id="3.30.230.10:FF:000003">
    <property type="entry name" value="Elongation factor G"/>
    <property type="match status" value="1"/>
</dbReference>
<dbReference type="FunFam" id="3.30.70.240:FF:000001">
    <property type="entry name" value="Elongation factor G"/>
    <property type="match status" value="1"/>
</dbReference>
<dbReference type="FunFam" id="3.30.70.870:FF:000001">
    <property type="entry name" value="Elongation factor G"/>
    <property type="match status" value="1"/>
</dbReference>
<dbReference type="FunFam" id="3.40.50.300:FF:000029">
    <property type="entry name" value="Elongation factor G"/>
    <property type="match status" value="1"/>
</dbReference>
<dbReference type="Gene3D" id="3.30.230.10">
    <property type="match status" value="1"/>
</dbReference>
<dbReference type="Gene3D" id="3.30.70.240">
    <property type="match status" value="1"/>
</dbReference>
<dbReference type="Gene3D" id="3.30.70.870">
    <property type="entry name" value="Elongation Factor G (Translational Gtpase), domain 3"/>
    <property type="match status" value="1"/>
</dbReference>
<dbReference type="Gene3D" id="3.40.50.300">
    <property type="entry name" value="P-loop containing nucleotide triphosphate hydrolases"/>
    <property type="match status" value="1"/>
</dbReference>
<dbReference type="Gene3D" id="2.40.30.10">
    <property type="entry name" value="Translation factors"/>
    <property type="match status" value="1"/>
</dbReference>
<dbReference type="HAMAP" id="MF_00054_B">
    <property type="entry name" value="EF_G_EF_2_B"/>
    <property type="match status" value="1"/>
</dbReference>
<dbReference type="InterPro" id="IPR041095">
    <property type="entry name" value="EFG_II"/>
</dbReference>
<dbReference type="InterPro" id="IPR009022">
    <property type="entry name" value="EFG_III"/>
</dbReference>
<dbReference type="InterPro" id="IPR035647">
    <property type="entry name" value="EFG_III/V"/>
</dbReference>
<dbReference type="InterPro" id="IPR047872">
    <property type="entry name" value="EFG_IV"/>
</dbReference>
<dbReference type="InterPro" id="IPR035649">
    <property type="entry name" value="EFG_V"/>
</dbReference>
<dbReference type="InterPro" id="IPR000640">
    <property type="entry name" value="EFG_V-like"/>
</dbReference>
<dbReference type="InterPro" id="IPR004161">
    <property type="entry name" value="EFTu-like_2"/>
</dbReference>
<dbReference type="InterPro" id="IPR031157">
    <property type="entry name" value="G_TR_CS"/>
</dbReference>
<dbReference type="InterPro" id="IPR027417">
    <property type="entry name" value="P-loop_NTPase"/>
</dbReference>
<dbReference type="InterPro" id="IPR020568">
    <property type="entry name" value="Ribosomal_Su5_D2-typ_SF"/>
</dbReference>
<dbReference type="InterPro" id="IPR014721">
    <property type="entry name" value="Ribsml_uS5_D2-typ_fold_subgr"/>
</dbReference>
<dbReference type="InterPro" id="IPR005225">
    <property type="entry name" value="Small_GTP-bd"/>
</dbReference>
<dbReference type="InterPro" id="IPR000795">
    <property type="entry name" value="T_Tr_GTP-bd_dom"/>
</dbReference>
<dbReference type="InterPro" id="IPR009000">
    <property type="entry name" value="Transl_B-barrel_sf"/>
</dbReference>
<dbReference type="InterPro" id="IPR004540">
    <property type="entry name" value="Transl_elong_EFG/EF2"/>
</dbReference>
<dbReference type="InterPro" id="IPR005517">
    <property type="entry name" value="Transl_elong_EFG/EF2_IV"/>
</dbReference>
<dbReference type="NCBIfam" id="TIGR00484">
    <property type="entry name" value="EF-G"/>
    <property type="match status" value="1"/>
</dbReference>
<dbReference type="NCBIfam" id="NF009379">
    <property type="entry name" value="PRK12740.1-3"/>
    <property type="match status" value="1"/>
</dbReference>
<dbReference type="NCBIfam" id="NF009381">
    <property type="entry name" value="PRK12740.1-5"/>
    <property type="match status" value="1"/>
</dbReference>
<dbReference type="NCBIfam" id="NF009891">
    <property type="entry name" value="PRK13351.1-1"/>
    <property type="match status" value="1"/>
</dbReference>
<dbReference type="NCBIfam" id="TIGR00231">
    <property type="entry name" value="small_GTP"/>
    <property type="match status" value="1"/>
</dbReference>
<dbReference type="PANTHER" id="PTHR43261:SF1">
    <property type="entry name" value="RIBOSOME-RELEASING FACTOR 2, MITOCHONDRIAL"/>
    <property type="match status" value="1"/>
</dbReference>
<dbReference type="PANTHER" id="PTHR43261">
    <property type="entry name" value="TRANSLATION ELONGATION FACTOR G-RELATED"/>
    <property type="match status" value="1"/>
</dbReference>
<dbReference type="Pfam" id="PF00679">
    <property type="entry name" value="EFG_C"/>
    <property type="match status" value="1"/>
</dbReference>
<dbReference type="Pfam" id="PF14492">
    <property type="entry name" value="EFG_III"/>
    <property type="match status" value="1"/>
</dbReference>
<dbReference type="Pfam" id="PF03764">
    <property type="entry name" value="EFG_IV"/>
    <property type="match status" value="1"/>
</dbReference>
<dbReference type="Pfam" id="PF00009">
    <property type="entry name" value="GTP_EFTU"/>
    <property type="match status" value="1"/>
</dbReference>
<dbReference type="Pfam" id="PF03144">
    <property type="entry name" value="GTP_EFTU_D2"/>
    <property type="match status" value="1"/>
</dbReference>
<dbReference type="PRINTS" id="PR00315">
    <property type="entry name" value="ELONGATNFCT"/>
</dbReference>
<dbReference type="SMART" id="SM00838">
    <property type="entry name" value="EFG_C"/>
    <property type="match status" value="1"/>
</dbReference>
<dbReference type="SMART" id="SM00889">
    <property type="entry name" value="EFG_IV"/>
    <property type="match status" value="1"/>
</dbReference>
<dbReference type="SUPFAM" id="SSF54980">
    <property type="entry name" value="EF-G C-terminal domain-like"/>
    <property type="match status" value="2"/>
</dbReference>
<dbReference type="SUPFAM" id="SSF52540">
    <property type="entry name" value="P-loop containing nucleoside triphosphate hydrolases"/>
    <property type="match status" value="1"/>
</dbReference>
<dbReference type="SUPFAM" id="SSF54211">
    <property type="entry name" value="Ribosomal protein S5 domain 2-like"/>
    <property type="match status" value="1"/>
</dbReference>
<dbReference type="SUPFAM" id="SSF50447">
    <property type="entry name" value="Translation proteins"/>
    <property type="match status" value="1"/>
</dbReference>
<dbReference type="PROSITE" id="PS00301">
    <property type="entry name" value="G_TR_1"/>
    <property type="match status" value="1"/>
</dbReference>
<dbReference type="PROSITE" id="PS51722">
    <property type="entry name" value="G_TR_2"/>
    <property type="match status" value="1"/>
</dbReference>
<reference key="1">
    <citation type="journal article" date="1996" name="Structure">
        <title>The structure of elongation factor G in complex with GDP: conformational flexibility and nucleotide exchange.</title>
        <authorList>
            <person name="Al-Karadaghi S."/>
            <person name="Aevarsson A."/>
            <person name="Garber M."/>
            <person name="Zheltonosova J."/>
            <person name="Liljas A."/>
        </authorList>
    </citation>
    <scope>X-RAY CRYSTALLOGRAPHY (2.4 ANGSTROMS)</scope>
</reference>
<reference key="2">
    <citation type="journal article" date="2000" name="J. Mol. Biol.">
        <title>Structure of a mutant EF-G reveals domain III and possibly the fusidic acid binding site.</title>
        <authorList>
            <person name="Laurberg M."/>
            <person name="Kristensen O."/>
            <person name="Martemyanov K."/>
            <person name="Gudkov A.T."/>
            <person name="Nagaev I."/>
            <person name="Hughes D."/>
            <person name="Liljas A."/>
        </authorList>
    </citation>
    <scope>X-RAY CRYSTALLOGRAPHY (2.8 ANGSTROMS) OF MUTANT ALA-573</scope>
</reference>
<evidence type="ECO:0000250" key="1"/>
<evidence type="ECO:0000305" key="2"/>
<evidence type="ECO:0007829" key="3">
    <source>
        <dbReference type="PDB" id="1FNM"/>
    </source>
</evidence>
<evidence type="ECO:0007829" key="4">
    <source>
        <dbReference type="PDB" id="2BM0"/>
    </source>
</evidence>
<evidence type="ECO:0007829" key="5">
    <source>
        <dbReference type="PDB" id="2BM1"/>
    </source>
</evidence>
<evidence type="ECO:0007829" key="6">
    <source>
        <dbReference type="PDB" id="2BV3"/>
    </source>
</evidence>
<evidence type="ECO:0007829" key="7">
    <source>
        <dbReference type="PDB" id="2J7K"/>
    </source>
</evidence>
<evidence type="ECO:0007829" key="8">
    <source>
        <dbReference type="PDB" id="3IZP"/>
    </source>
</evidence>
<evidence type="ECO:0007829" key="9">
    <source>
        <dbReference type="PDB" id="4M1K"/>
    </source>
</evidence>